<reference key="1">
    <citation type="submission" date="2003-03" db="EMBL/GenBank/DDBJ databases">
        <title>African swine fever virus genomes.</title>
        <authorList>
            <person name="Kutish G.F."/>
            <person name="Rock D.L."/>
        </authorList>
    </citation>
    <scope>NUCLEOTIDE SEQUENCE [LARGE SCALE GENOMIC DNA]</scope>
</reference>
<evidence type="ECO:0000250" key="1"/>
<evidence type="ECO:0000305" key="2"/>
<gene>
    <name type="ordered locus">Ken-169</name>
</gene>
<proteinExistence type="inferred from homology"/>
<name>36021_ASFK5</name>
<organism>
    <name type="scientific">African swine fever virus (isolate Pig/Kenya/KEN-50/1950)</name>
    <name type="common">ASFV</name>
    <dbReference type="NCBI Taxonomy" id="561445"/>
    <lineage>
        <taxon>Viruses</taxon>
        <taxon>Varidnaviria</taxon>
        <taxon>Bamfordvirae</taxon>
        <taxon>Nucleocytoviricota</taxon>
        <taxon>Pokkesviricetes</taxon>
        <taxon>Asfuvirales</taxon>
        <taxon>Asfarviridae</taxon>
        <taxon>Asfivirus</taxon>
        <taxon>African swine fever virus</taxon>
    </lineage>
</organism>
<dbReference type="EMBL" id="AY261360">
    <property type="status" value="NOT_ANNOTATED_CDS"/>
    <property type="molecule type" value="Genomic_DNA"/>
</dbReference>
<dbReference type="SMR" id="P0C9S1"/>
<dbReference type="Proteomes" id="UP000000861">
    <property type="component" value="Segment"/>
</dbReference>
<dbReference type="GO" id="GO:0042330">
    <property type="term" value="P:taxis"/>
    <property type="evidence" value="ECO:0007669"/>
    <property type="project" value="InterPro"/>
</dbReference>
<dbReference type="InterPro" id="IPR002595">
    <property type="entry name" value="ASFV_MGF360"/>
</dbReference>
<dbReference type="Pfam" id="PF01671">
    <property type="entry name" value="ASFV_360"/>
    <property type="match status" value="1"/>
</dbReference>
<feature type="chain" id="PRO_0000373309" description="Protein MGF 360-21R">
    <location>
        <begin position="1"/>
        <end position="364"/>
    </location>
</feature>
<comment type="function">
    <text evidence="1">Plays a role in virus cell tropism, and may be required for efficient virus replication in macrophages.</text>
</comment>
<comment type="similarity">
    <text evidence="2">Belongs to the asfivirus MGF 360 family.</text>
</comment>
<sequence>MSTPSSLQVLVKRVLDFQHVSEDDYCILKCCGLWWHGGPIMLSTNEDNQMMIKSASFKDGLEINLALMMAVQENNCSLIELFTEWGADINSGLVTVNTEYTRNLCRNLGAKETLNKREILDVFLKLKNFKSSNNIILSHELLSNNPLFLSEDNDYFRRIINCNLRRISINFILDEISFNEKLTRFWYSQAVLYNLTEAIQYFYQKYEHLNEWRLICALSFNNVFDLHEIYNKEKVGMDINQMIEITCAYMCSYSTIYYCFVMGADINRAMIISVTKSYTYNLFFCIDLGATAFEECLEIAKQQNNNELVKILSLKNYYSPDSSLISLKITDPEKINILLDEENYESKNELIYEESNINNSDDIF</sequence>
<accession>P0C9S1</accession>
<protein>
    <recommendedName>
        <fullName>Protein MGF 360-21R</fullName>
    </recommendedName>
</protein>
<organismHost>
    <name type="scientific">Ornithodoros</name>
    <name type="common">relapsing fever ticks</name>
    <dbReference type="NCBI Taxonomy" id="6937"/>
</organismHost>
<organismHost>
    <name type="scientific">Phacochoerus aethiopicus</name>
    <name type="common">Warthog</name>
    <dbReference type="NCBI Taxonomy" id="85517"/>
</organismHost>
<organismHost>
    <name type="scientific">Phacochoerus africanus</name>
    <name type="common">Warthog</name>
    <dbReference type="NCBI Taxonomy" id="41426"/>
</organismHost>
<organismHost>
    <name type="scientific">Potamochoerus larvatus</name>
    <name type="common">Bushpig</name>
    <dbReference type="NCBI Taxonomy" id="273792"/>
</organismHost>
<organismHost>
    <name type="scientific">Sus scrofa</name>
    <name type="common">Pig</name>
    <dbReference type="NCBI Taxonomy" id="9823"/>
</organismHost>